<gene>
    <name evidence="1" type="primary">rpsH</name>
    <name type="ordered locus">SUN_2335</name>
</gene>
<comment type="function">
    <text evidence="1">One of the primary rRNA binding proteins, it binds directly to 16S rRNA central domain where it helps coordinate assembly of the platform of the 30S subunit.</text>
</comment>
<comment type="subunit">
    <text evidence="1">Part of the 30S ribosomal subunit. Contacts proteins S5 and S12.</text>
</comment>
<comment type="similarity">
    <text evidence="1">Belongs to the universal ribosomal protein uS8 family.</text>
</comment>
<protein>
    <recommendedName>
        <fullName evidence="1">Small ribosomal subunit protein uS8</fullName>
    </recommendedName>
    <alternativeName>
        <fullName evidence="2">30S ribosomal protein S8</fullName>
    </alternativeName>
</protein>
<name>RS8_SULNB</name>
<accession>A6QCR2</accession>
<keyword id="KW-0687">Ribonucleoprotein</keyword>
<keyword id="KW-0689">Ribosomal protein</keyword>
<keyword id="KW-0694">RNA-binding</keyword>
<keyword id="KW-0699">rRNA-binding</keyword>
<dbReference type="EMBL" id="AP009179">
    <property type="protein sequence ID" value="BAF73271.1"/>
    <property type="molecule type" value="Genomic_DNA"/>
</dbReference>
<dbReference type="RefSeq" id="WP_012084112.1">
    <property type="nucleotide sequence ID" value="NC_009663.1"/>
</dbReference>
<dbReference type="SMR" id="A6QCR2"/>
<dbReference type="STRING" id="387093.SUN_2335"/>
<dbReference type="KEGG" id="sun:SUN_2335"/>
<dbReference type="eggNOG" id="COG0096">
    <property type="taxonomic scope" value="Bacteria"/>
</dbReference>
<dbReference type="HOGENOM" id="CLU_098428_0_2_7"/>
<dbReference type="OrthoDB" id="9802617at2"/>
<dbReference type="Proteomes" id="UP000006378">
    <property type="component" value="Chromosome"/>
</dbReference>
<dbReference type="GO" id="GO:1990904">
    <property type="term" value="C:ribonucleoprotein complex"/>
    <property type="evidence" value="ECO:0007669"/>
    <property type="project" value="UniProtKB-KW"/>
</dbReference>
<dbReference type="GO" id="GO:0005840">
    <property type="term" value="C:ribosome"/>
    <property type="evidence" value="ECO:0007669"/>
    <property type="project" value="UniProtKB-KW"/>
</dbReference>
<dbReference type="GO" id="GO:0019843">
    <property type="term" value="F:rRNA binding"/>
    <property type="evidence" value="ECO:0007669"/>
    <property type="project" value="UniProtKB-UniRule"/>
</dbReference>
<dbReference type="GO" id="GO:0003735">
    <property type="term" value="F:structural constituent of ribosome"/>
    <property type="evidence" value="ECO:0007669"/>
    <property type="project" value="InterPro"/>
</dbReference>
<dbReference type="GO" id="GO:0006412">
    <property type="term" value="P:translation"/>
    <property type="evidence" value="ECO:0007669"/>
    <property type="project" value="UniProtKB-UniRule"/>
</dbReference>
<dbReference type="FunFam" id="3.30.1490.10:FF:000001">
    <property type="entry name" value="30S ribosomal protein S8"/>
    <property type="match status" value="1"/>
</dbReference>
<dbReference type="Gene3D" id="3.30.1370.30">
    <property type="match status" value="1"/>
</dbReference>
<dbReference type="Gene3D" id="3.30.1490.10">
    <property type="match status" value="1"/>
</dbReference>
<dbReference type="HAMAP" id="MF_01302_B">
    <property type="entry name" value="Ribosomal_uS8_B"/>
    <property type="match status" value="1"/>
</dbReference>
<dbReference type="InterPro" id="IPR000630">
    <property type="entry name" value="Ribosomal_uS8"/>
</dbReference>
<dbReference type="InterPro" id="IPR047863">
    <property type="entry name" value="Ribosomal_uS8_CS"/>
</dbReference>
<dbReference type="InterPro" id="IPR035987">
    <property type="entry name" value="Ribosomal_uS8_sf"/>
</dbReference>
<dbReference type="NCBIfam" id="NF001109">
    <property type="entry name" value="PRK00136.1"/>
    <property type="match status" value="1"/>
</dbReference>
<dbReference type="PANTHER" id="PTHR11758">
    <property type="entry name" value="40S RIBOSOMAL PROTEIN S15A"/>
    <property type="match status" value="1"/>
</dbReference>
<dbReference type="Pfam" id="PF00410">
    <property type="entry name" value="Ribosomal_S8"/>
    <property type="match status" value="1"/>
</dbReference>
<dbReference type="SUPFAM" id="SSF56047">
    <property type="entry name" value="Ribosomal protein S8"/>
    <property type="match status" value="1"/>
</dbReference>
<dbReference type="PROSITE" id="PS00053">
    <property type="entry name" value="RIBOSOMAL_S8"/>
    <property type="match status" value="1"/>
</dbReference>
<proteinExistence type="inferred from homology"/>
<evidence type="ECO:0000255" key="1">
    <source>
        <dbReference type="HAMAP-Rule" id="MF_01302"/>
    </source>
</evidence>
<evidence type="ECO:0000305" key="2"/>
<organism>
    <name type="scientific">Sulfurovum sp. (strain NBC37-1)</name>
    <dbReference type="NCBI Taxonomy" id="387093"/>
    <lineage>
        <taxon>Bacteria</taxon>
        <taxon>Pseudomonadati</taxon>
        <taxon>Campylobacterota</taxon>
        <taxon>Epsilonproteobacteria</taxon>
        <taxon>Campylobacterales</taxon>
        <taxon>Sulfurovaceae</taxon>
        <taxon>Sulfurovum</taxon>
    </lineage>
</organism>
<sequence length="131" mass="14689">MMTDIIADSLTRIRNAAQRRLDVTTLLHSNTIEATVAIFVDKGYLESYKVKEDGNKKTIKVVLKYDDNEKSVINEIKKISKPGRRVHQGKDEIRTFKNGYGTLVVSTSQGVLANDEAYKRGIGGEVICSIW</sequence>
<feature type="chain" id="PRO_0000305758" description="Small ribosomal subunit protein uS8">
    <location>
        <begin position="1"/>
        <end position="131"/>
    </location>
</feature>
<reference key="1">
    <citation type="journal article" date="2007" name="Proc. Natl. Acad. Sci. U.S.A.">
        <title>Deep-sea vent epsilon-proteobacterial genomes provide insights into emergence of pathogens.</title>
        <authorList>
            <person name="Nakagawa S."/>
            <person name="Takaki Y."/>
            <person name="Shimamura S."/>
            <person name="Reysenbach A.-L."/>
            <person name="Takai K."/>
            <person name="Horikoshi K."/>
        </authorList>
    </citation>
    <scope>NUCLEOTIDE SEQUENCE [LARGE SCALE GENOMIC DNA]</scope>
    <source>
        <strain>NBC37-1</strain>
    </source>
</reference>